<keyword id="KW-0025">Alternative splicing</keyword>
<keyword id="KW-0175">Coiled coil</keyword>
<keyword id="KW-0597">Phosphoprotein</keyword>
<keyword id="KW-1267">Proteomics identification</keyword>
<keyword id="KW-1185">Reference proteome</keyword>
<organism>
    <name type="scientific">Homo sapiens</name>
    <name type="common">Human</name>
    <dbReference type="NCBI Taxonomy" id="9606"/>
    <lineage>
        <taxon>Eukaryota</taxon>
        <taxon>Metazoa</taxon>
        <taxon>Chordata</taxon>
        <taxon>Craniata</taxon>
        <taxon>Vertebrata</taxon>
        <taxon>Euteleostomi</taxon>
        <taxon>Mammalia</taxon>
        <taxon>Eutheria</taxon>
        <taxon>Euarchontoglires</taxon>
        <taxon>Primates</taxon>
        <taxon>Haplorrhini</taxon>
        <taxon>Catarrhini</taxon>
        <taxon>Hominidae</taxon>
        <taxon>Homo</taxon>
    </lineage>
</organism>
<gene>
    <name type="primary">SAMD14</name>
</gene>
<accession>Q8IZD0</accession>
<accession>A5D8V1</accession>
<accession>Q8N2X0</accession>
<feature type="chain" id="PRO_0000250563" description="Sterile alpha motif domain-containing protein 14">
    <location>
        <begin position="1"/>
        <end position="417"/>
    </location>
</feature>
<feature type="domain" description="SAM" evidence="4">
    <location>
        <begin position="326"/>
        <end position="389"/>
    </location>
</feature>
<feature type="region of interest" description="Disordered" evidence="5">
    <location>
        <begin position="37"/>
        <end position="299"/>
    </location>
</feature>
<feature type="region of interest" description="Disordered" evidence="5">
    <location>
        <begin position="388"/>
        <end position="417"/>
    </location>
</feature>
<feature type="coiled-coil region" evidence="3">
    <location>
        <begin position="377"/>
        <end position="417"/>
    </location>
</feature>
<feature type="compositionally biased region" description="Basic residues" evidence="5">
    <location>
        <begin position="40"/>
        <end position="49"/>
    </location>
</feature>
<feature type="compositionally biased region" description="Low complexity" evidence="5">
    <location>
        <begin position="135"/>
        <end position="153"/>
    </location>
</feature>
<feature type="compositionally biased region" description="Basic and acidic residues" evidence="5">
    <location>
        <begin position="160"/>
        <end position="173"/>
    </location>
</feature>
<feature type="compositionally biased region" description="Low complexity" evidence="5">
    <location>
        <begin position="244"/>
        <end position="260"/>
    </location>
</feature>
<feature type="compositionally biased region" description="Low complexity" evidence="5">
    <location>
        <begin position="276"/>
        <end position="295"/>
    </location>
</feature>
<feature type="compositionally biased region" description="Basic and acidic residues" evidence="5">
    <location>
        <begin position="390"/>
        <end position="417"/>
    </location>
</feature>
<feature type="modified residue" description="Phosphoserine" evidence="2">
    <location>
        <position position="84"/>
    </location>
</feature>
<feature type="modified residue" description="Phosphoserine" evidence="2">
    <location>
        <position position="108"/>
    </location>
</feature>
<feature type="modified residue" description="Phosphoserine" evidence="2">
    <location>
        <position position="173"/>
    </location>
</feature>
<feature type="modified residue" description="Phosphoserine" evidence="1">
    <location>
        <position position="179"/>
    </location>
</feature>
<feature type="modified residue" description="Phosphoserine" evidence="2">
    <location>
        <position position="279"/>
    </location>
</feature>
<feature type="modified residue" description="Phosphothreonine" evidence="2">
    <location>
        <position position="283"/>
    </location>
</feature>
<feature type="splice variant" id="VSP_020659" description="In isoform 2." evidence="6">
    <original>Q</original>
    <variation>QAQLLAHAQEALSNSWCLVQDFGSTQIGM</variation>
    <location>
        <position position="274"/>
    </location>
</feature>
<dbReference type="EMBL" id="AY148482">
    <property type="protein sequence ID" value="AAN71008.1"/>
    <property type="molecule type" value="mRNA"/>
</dbReference>
<dbReference type="EMBL" id="AK094209">
    <property type="protein sequence ID" value="BAG52844.1"/>
    <property type="molecule type" value="mRNA"/>
</dbReference>
<dbReference type="EMBL" id="CH471109">
    <property type="protein sequence ID" value="EAW94641.1"/>
    <property type="molecule type" value="Genomic_DNA"/>
</dbReference>
<dbReference type="EMBL" id="BC029872">
    <property type="protein sequence ID" value="AAH29872.1"/>
    <property type="molecule type" value="mRNA"/>
</dbReference>
<dbReference type="EMBL" id="BC136485">
    <property type="protein sequence ID" value="AAI36486.1"/>
    <property type="molecule type" value="mRNA"/>
</dbReference>
<dbReference type="EMBL" id="BC141822">
    <property type="protein sequence ID" value="AAI41823.1"/>
    <property type="molecule type" value="mRNA"/>
</dbReference>
<dbReference type="EMBL" id="BC142728">
    <property type="protein sequence ID" value="AAI42729.1"/>
    <property type="molecule type" value="mRNA"/>
</dbReference>
<dbReference type="CCDS" id="CCDS11560.1">
    <molecule id="Q8IZD0-2"/>
</dbReference>
<dbReference type="CCDS" id="CCDS58562.1">
    <molecule id="Q8IZD0-1"/>
</dbReference>
<dbReference type="RefSeq" id="NP_001244288.1">
    <molecule id="Q8IZD0-1"/>
    <property type="nucleotide sequence ID" value="NM_001257359.2"/>
</dbReference>
<dbReference type="RefSeq" id="NP_777580.1">
    <molecule id="Q8IZD0-2"/>
    <property type="nucleotide sequence ID" value="NM_174920.4"/>
</dbReference>
<dbReference type="RefSeq" id="XP_016879812.1">
    <property type="nucleotide sequence ID" value="XM_017024323.1"/>
</dbReference>
<dbReference type="RefSeq" id="XP_016879813.1">
    <property type="nucleotide sequence ID" value="XM_017024324.1"/>
</dbReference>
<dbReference type="SMR" id="Q8IZD0"/>
<dbReference type="FunCoup" id="Q8IZD0">
    <property type="interactions" value="46"/>
</dbReference>
<dbReference type="IntAct" id="Q8IZD0">
    <property type="interactions" value="1"/>
</dbReference>
<dbReference type="STRING" id="9606.ENSP00000424474"/>
<dbReference type="GlyGen" id="Q8IZD0">
    <property type="glycosylation" value="2 sites, 1 O-linked glycan (2 sites)"/>
</dbReference>
<dbReference type="iPTMnet" id="Q8IZD0"/>
<dbReference type="PhosphoSitePlus" id="Q8IZD0"/>
<dbReference type="BioMuta" id="SAMD14"/>
<dbReference type="DMDM" id="115502829"/>
<dbReference type="MassIVE" id="Q8IZD0"/>
<dbReference type="PaxDb" id="9606-ENSP00000424474"/>
<dbReference type="PeptideAtlas" id="Q8IZD0"/>
<dbReference type="ProteomicsDB" id="71320">
    <molecule id="Q8IZD0-1"/>
</dbReference>
<dbReference type="ProteomicsDB" id="71321">
    <molecule id="Q8IZD0-2"/>
</dbReference>
<dbReference type="Antibodypedia" id="30475">
    <property type="antibodies" value="63 antibodies from 16 providers"/>
</dbReference>
<dbReference type="DNASU" id="201191"/>
<dbReference type="Ensembl" id="ENST00000330175.9">
    <molecule id="Q8IZD0-1"/>
    <property type="protein sequence ID" value="ENSP00000329144.4"/>
    <property type="gene ID" value="ENSG00000167100.15"/>
</dbReference>
<dbReference type="Ensembl" id="ENST00000503131.1">
    <molecule id="Q8IZD0-2"/>
    <property type="protein sequence ID" value="ENSP00000424474.1"/>
    <property type="gene ID" value="ENSG00000167100.15"/>
</dbReference>
<dbReference type="GeneID" id="201191"/>
<dbReference type="KEGG" id="hsa:201191"/>
<dbReference type="MANE-Select" id="ENST00000330175.9">
    <property type="protein sequence ID" value="ENSP00000329144.4"/>
    <property type="RefSeq nucleotide sequence ID" value="NM_001257359.2"/>
    <property type="RefSeq protein sequence ID" value="NP_001244288.1"/>
</dbReference>
<dbReference type="UCSC" id="uc002iqf.5">
    <molecule id="Q8IZD0-1"/>
    <property type="organism name" value="human"/>
</dbReference>
<dbReference type="AGR" id="HGNC:27312"/>
<dbReference type="CTD" id="201191"/>
<dbReference type="DisGeNET" id="201191"/>
<dbReference type="GeneCards" id="SAMD14"/>
<dbReference type="HGNC" id="HGNC:27312">
    <property type="gene designation" value="SAMD14"/>
</dbReference>
<dbReference type="HPA" id="ENSG00000167100">
    <property type="expression patterns" value="Tissue enriched (brain)"/>
</dbReference>
<dbReference type="MIM" id="619233">
    <property type="type" value="gene"/>
</dbReference>
<dbReference type="neXtProt" id="NX_Q8IZD0"/>
<dbReference type="OpenTargets" id="ENSG00000167100"/>
<dbReference type="PharmGKB" id="PA142670953"/>
<dbReference type="VEuPathDB" id="HostDB:ENSG00000167100"/>
<dbReference type="eggNOG" id="KOG1945">
    <property type="taxonomic scope" value="Eukaryota"/>
</dbReference>
<dbReference type="GeneTree" id="ENSGT00940000160279"/>
<dbReference type="HOGENOM" id="CLU_054578_0_0_1"/>
<dbReference type="InParanoid" id="Q8IZD0"/>
<dbReference type="OMA" id="TANHWTS"/>
<dbReference type="OrthoDB" id="445896at2759"/>
<dbReference type="PAN-GO" id="Q8IZD0">
    <property type="GO annotations" value="8 GO annotations based on evolutionary models"/>
</dbReference>
<dbReference type="PhylomeDB" id="Q8IZD0"/>
<dbReference type="TreeFam" id="TF331870"/>
<dbReference type="PathwayCommons" id="Q8IZD0"/>
<dbReference type="SignaLink" id="Q8IZD0"/>
<dbReference type="BioGRID-ORCS" id="201191">
    <property type="hits" value="11 hits in 1148 CRISPR screens"/>
</dbReference>
<dbReference type="ChiTaRS" id="SAMD14">
    <property type="organism name" value="human"/>
</dbReference>
<dbReference type="GenomeRNAi" id="201191"/>
<dbReference type="Pharos" id="Q8IZD0">
    <property type="development level" value="Tbio"/>
</dbReference>
<dbReference type="PRO" id="PR:Q8IZD0"/>
<dbReference type="Proteomes" id="UP000005640">
    <property type="component" value="Chromosome 17"/>
</dbReference>
<dbReference type="RNAct" id="Q8IZD0">
    <property type="molecule type" value="protein"/>
</dbReference>
<dbReference type="Bgee" id="ENSG00000167100">
    <property type="expression patterns" value="Expressed in right hemisphere of cerebellum and 155 other cell types or tissues"/>
</dbReference>
<dbReference type="ExpressionAtlas" id="Q8IZD0">
    <property type="expression patterns" value="baseline and differential"/>
</dbReference>
<dbReference type="GO" id="GO:0015629">
    <property type="term" value="C:actin cytoskeleton"/>
    <property type="evidence" value="ECO:0000318"/>
    <property type="project" value="GO_Central"/>
</dbReference>
<dbReference type="GO" id="GO:0005737">
    <property type="term" value="C:cytoplasm"/>
    <property type="evidence" value="ECO:0000318"/>
    <property type="project" value="GO_Central"/>
</dbReference>
<dbReference type="GO" id="GO:0030425">
    <property type="term" value="C:dendrite"/>
    <property type="evidence" value="ECO:0000318"/>
    <property type="project" value="GO_Central"/>
</dbReference>
<dbReference type="GO" id="GO:0014069">
    <property type="term" value="C:postsynaptic density"/>
    <property type="evidence" value="ECO:0000318"/>
    <property type="project" value="GO_Central"/>
</dbReference>
<dbReference type="GO" id="GO:0051015">
    <property type="term" value="F:actin filament binding"/>
    <property type="evidence" value="ECO:0000318"/>
    <property type="project" value="GO_Central"/>
</dbReference>
<dbReference type="GO" id="GO:0007015">
    <property type="term" value="P:actin filament organization"/>
    <property type="evidence" value="ECO:0000318"/>
    <property type="project" value="GO_Central"/>
</dbReference>
<dbReference type="GO" id="GO:0019722">
    <property type="term" value="P:calcium-mediated signaling"/>
    <property type="evidence" value="ECO:0000318"/>
    <property type="project" value="GO_Central"/>
</dbReference>
<dbReference type="GO" id="GO:0031175">
    <property type="term" value="P:neuron projection development"/>
    <property type="evidence" value="ECO:0000318"/>
    <property type="project" value="GO_Central"/>
</dbReference>
<dbReference type="CDD" id="cd09512">
    <property type="entry name" value="SAM_Neurabin-like"/>
    <property type="match status" value="1"/>
</dbReference>
<dbReference type="FunFam" id="1.10.150.50:FF:000008">
    <property type="entry name" value="Neurabin-1 isoform 1-like protein"/>
    <property type="match status" value="1"/>
</dbReference>
<dbReference type="Gene3D" id="1.10.150.50">
    <property type="entry name" value="Transcription Factor, Ets-1"/>
    <property type="match status" value="1"/>
</dbReference>
<dbReference type="InterPro" id="IPR043446">
    <property type="entry name" value="Neurabin-like"/>
</dbReference>
<dbReference type="InterPro" id="IPR001660">
    <property type="entry name" value="SAM"/>
</dbReference>
<dbReference type="InterPro" id="IPR013761">
    <property type="entry name" value="SAM/pointed_sf"/>
</dbReference>
<dbReference type="PANTHER" id="PTHR16154">
    <property type="entry name" value="NEURABIN"/>
    <property type="match status" value="1"/>
</dbReference>
<dbReference type="PANTHER" id="PTHR16154:SF28">
    <property type="entry name" value="STERILE ALPHA MOTIF DOMAIN-CONTAINING PROTEIN 14"/>
    <property type="match status" value="1"/>
</dbReference>
<dbReference type="Pfam" id="PF07647">
    <property type="entry name" value="SAM_2"/>
    <property type="match status" value="1"/>
</dbReference>
<dbReference type="SMART" id="SM00454">
    <property type="entry name" value="SAM"/>
    <property type="match status" value="1"/>
</dbReference>
<dbReference type="SUPFAM" id="SSF47769">
    <property type="entry name" value="SAM/Pointed domain"/>
    <property type="match status" value="1"/>
</dbReference>
<dbReference type="PROSITE" id="PS50105">
    <property type="entry name" value="SAM_DOMAIN"/>
    <property type="match status" value="1"/>
</dbReference>
<name>SAM14_HUMAN</name>
<reference key="1">
    <citation type="submission" date="2002-09" db="EMBL/GenBank/DDBJ databases">
        <authorList>
            <person name="Guo J.H."/>
            <person name="Yu L."/>
        </authorList>
    </citation>
    <scope>NUCLEOTIDE SEQUENCE [LARGE SCALE MRNA] (ISOFORM 2)</scope>
    <source>
        <tissue>Brain</tissue>
    </source>
</reference>
<reference key="2">
    <citation type="journal article" date="2004" name="Nat. Genet.">
        <title>Complete sequencing and characterization of 21,243 full-length human cDNAs.</title>
        <authorList>
            <person name="Ota T."/>
            <person name="Suzuki Y."/>
            <person name="Nishikawa T."/>
            <person name="Otsuki T."/>
            <person name="Sugiyama T."/>
            <person name="Irie R."/>
            <person name="Wakamatsu A."/>
            <person name="Hayashi K."/>
            <person name="Sato H."/>
            <person name="Nagai K."/>
            <person name="Kimura K."/>
            <person name="Makita H."/>
            <person name="Sekine M."/>
            <person name="Obayashi M."/>
            <person name="Nishi T."/>
            <person name="Shibahara T."/>
            <person name="Tanaka T."/>
            <person name="Ishii S."/>
            <person name="Yamamoto J."/>
            <person name="Saito K."/>
            <person name="Kawai Y."/>
            <person name="Isono Y."/>
            <person name="Nakamura Y."/>
            <person name="Nagahari K."/>
            <person name="Murakami K."/>
            <person name="Yasuda T."/>
            <person name="Iwayanagi T."/>
            <person name="Wagatsuma M."/>
            <person name="Shiratori A."/>
            <person name="Sudo H."/>
            <person name="Hosoiri T."/>
            <person name="Kaku Y."/>
            <person name="Kodaira H."/>
            <person name="Kondo H."/>
            <person name="Sugawara M."/>
            <person name="Takahashi M."/>
            <person name="Kanda K."/>
            <person name="Yokoi T."/>
            <person name="Furuya T."/>
            <person name="Kikkawa E."/>
            <person name="Omura Y."/>
            <person name="Abe K."/>
            <person name="Kamihara K."/>
            <person name="Katsuta N."/>
            <person name="Sato K."/>
            <person name="Tanikawa M."/>
            <person name="Yamazaki M."/>
            <person name="Ninomiya K."/>
            <person name="Ishibashi T."/>
            <person name="Yamashita H."/>
            <person name="Murakawa K."/>
            <person name="Fujimori K."/>
            <person name="Tanai H."/>
            <person name="Kimata M."/>
            <person name="Watanabe M."/>
            <person name="Hiraoka S."/>
            <person name="Chiba Y."/>
            <person name="Ishida S."/>
            <person name="Ono Y."/>
            <person name="Takiguchi S."/>
            <person name="Watanabe S."/>
            <person name="Yosida M."/>
            <person name="Hotuta T."/>
            <person name="Kusano J."/>
            <person name="Kanehori K."/>
            <person name="Takahashi-Fujii A."/>
            <person name="Hara H."/>
            <person name="Tanase T.-O."/>
            <person name="Nomura Y."/>
            <person name="Togiya S."/>
            <person name="Komai F."/>
            <person name="Hara R."/>
            <person name="Takeuchi K."/>
            <person name="Arita M."/>
            <person name="Imose N."/>
            <person name="Musashino K."/>
            <person name="Yuuki H."/>
            <person name="Oshima A."/>
            <person name="Sasaki N."/>
            <person name="Aotsuka S."/>
            <person name="Yoshikawa Y."/>
            <person name="Matsunawa H."/>
            <person name="Ichihara T."/>
            <person name="Shiohata N."/>
            <person name="Sano S."/>
            <person name="Moriya S."/>
            <person name="Momiyama H."/>
            <person name="Satoh N."/>
            <person name="Takami S."/>
            <person name="Terashima Y."/>
            <person name="Suzuki O."/>
            <person name="Nakagawa S."/>
            <person name="Senoh A."/>
            <person name="Mizoguchi H."/>
            <person name="Goto Y."/>
            <person name="Shimizu F."/>
            <person name="Wakebe H."/>
            <person name="Hishigaki H."/>
            <person name="Watanabe T."/>
            <person name="Sugiyama A."/>
            <person name="Takemoto M."/>
            <person name="Kawakami B."/>
            <person name="Yamazaki M."/>
            <person name="Watanabe K."/>
            <person name="Kumagai A."/>
            <person name="Itakura S."/>
            <person name="Fukuzumi Y."/>
            <person name="Fujimori Y."/>
            <person name="Komiyama M."/>
            <person name="Tashiro H."/>
            <person name="Tanigami A."/>
            <person name="Fujiwara T."/>
            <person name="Ono T."/>
            <person name="Yamada K."/>
            <person name="Fujii Y."/>
            <person name="Ozaki K."/>
            <person name="Hirao M."/>
            <person name="Ohmori Y."/>
            <person name="Kawabata A."/>
            <person name="Hikiji T."/>
            <person name="Kobatake N."/>
            <person name="Inagaki H."/>
            <person name="Ikema Y."/>
            <person name="Okamoto S."/>
            <person name="Okitani R."/>
            <person name="Kawakami T."/>
            <person name="Noguchi S."/>
            <person name="Itoh T."/>
            <person name="Shigeta K."/>
            <person name="Senba T."/>
            <person name="Matsumura K."/>
            <person name="Nakajima Y."/>
            <person name="Mizuno T."/>
            <person name="Morinaga M."/>
            <person name="Sasaki M."/>
            <person name="Togashi T."/>
            <person name="Oyama M."/>
            <person name="Hata H."/>
            <person name="Watanabe M."/>
            <person name="Komatsu T."/>
            <person name="Mizushima-Sugano J."/>
            <person name="Satoh T."/>
            <person name="Shirai Y."/>
            <person name="Takahashi Y."/>
            <person name="Nakagawa K."/>
            <person name="Okumura K."/>
            <person name="Nagase T."/>
            <person name="Nomura N."/>
            <person name="Kikuchi H."/>
            <person name="Masuho Y."/>
            <person name="Yamashita R."/>
            <person name="Nakai K."/>
            <person name="Yada T."/>
            <person name="Nakamura Y."/>
            <person name="Ohara O."/>
            <person name="Isogai T."/>
            <person name="Sugano S."/>
        </authorList>
    </citation>
    <scope>NUCLEOTIDE SEQUENCE [LARGE SCALE MRNA]</scope>
    <source>
        <tissue>Cerebellum</tissue>
    </source>
</reference>
<reference key="3">
    <citation type="submission" date="2005-09" db="EMBL/GenBank/DDBJ databases">
        <authorList>
            <person name="Mural R.J."/>
            <person name="Istrail S."/>
            <person name="Sutton G.G."/>
            <person name="Florea L."/>
            <person name="Halpern A.L."/>
            <person name="Mobarry C.M."/>
            <person name="Lippert R."/>
            <person name="Walenz B."/>
            <person name="Shatkay H."/>
            <person name="Dew I."/>
            <person name="Miller J.R."/>
            <person name="Flanigan M.J."/>
            <person name="Edwards N.J."/>
            <person name="Bolanos R."/>
            <person name="Fasulo D."/>
            <person name="Halldorsson B.V."/>
            <person name="Hannenhalli S."/>
            <person name="Turner R."/>
            <person name="Yooseph S."/>
            <person name="Lu F."/>
            <person name="Nusskern D.R."/>
            <person name="Shue B.C."/>
            <person name="Zheng X.H."/>
            <person name="Zhong F."/>
            <person name="Delcher A.L."/>
            <person name="Huson D.H."/>
            <person name="Kravitz S.A."/>
            <person name="Mouchard L."/>
            <person name="Reinert K."/>
            <person name="Remington K.A."/>
            <person name="Clark A.G."/>
            <person name="Waterman M.S."/>
            <person name="Eichler E.E."/>
            <person name="Adams M.D."/>
            <person name="Hunkapiller M.W."/>
            <person name="Myers E.W."/>
            <person name="Venter J.C."/>
        </authorList>
    </citation>
    <scope>NUCLEOTIDE SEQUENCE [LARGE SCALE GENOMIC DNA]</scope>
</reference>
<reference key="4">
    <citation type="journal article" date="2004" name="Genome Res.">
        <title>The status, quality, and expansion of the NIH full-length cDNA project: the Mammalian Gene Collection (MGC).</title>
        <authorList>
            <consortium name="The MGC Project Team"/>
        </authorList>
    </citation>
    <scope>NUCLEOTIDE SEQUENCE [LARGE SCALE MRNA] (ISOFORM 1)</scope>
    <source>
        <tissue>Brain</tissue>
        <tissue>Testis</tissue>
    </source>
</reference>
<comment type="alternative products">
    <event type="alternative splicing"/>
    <isoform>
        <id>Q8IZD0-1</id>
        <name>1</name>
        <sequence type="displayed"/>
    </isoform>
    <isoform>
        <id>Q8IZD0-2</id>
        <name>2</name>
        <sequence type="described" ref="VSP_020659"/>
    </isoform>
</comment>
<proteinExistence type="evidence at protein level"/>
<sequence>MASSKLREPVDEVFDLDLAVPETARLDSSLHKARAQLLAKGRRHRPSRSRLRDSASSAEDGEGSDGPGGKVTDGCGSPLHRLRSPLHSGPGSPAGGSFCLDPPGLRRSLDEDEPPPSPLTRYRPLHNAASHEGLAAASCSPPRSAPSSDSSPSFVRRHPRAEPHSEDDSRDASPPEPASPTIGLDKKTRRKFLDLGVTLRRASTGKSRKEKGSNRLSMGSRESVEGSGRSGGSPFLPFSWFTDSGKGSASSGSTTSPTCSPKHEGFSPKKSASQESTLSDDSTPPSSSPKIPSGPWQEAKCSYPYHTLSQSSDEFLDEPLPPVHHWTSQQVGQWLQSLNLEQYAAEFAARQVDGPQLLQLDGSKLKSLGLSNSHDRALVKRKLKEMAAAAEKERKAQEKAARQREKLRRREQEAKKS</sequence>
<protein>
    <recommendedName>
        <fullName>Sterile alpha motif domain-containing protein 14</fullName>
        <shortName>SAM domain-containing protein 14</shortName>
    </recommendedName>
</protein>
<evidence type="ECO:0000250" key="1">
    <source>
        <dbReference type="UniProtKB" id="Q5BJU3"/>
    </source>
</evidence>
<evidence type="ECO:0000250" key="2">
    <source>
        <dbReference type="UniProtKB" id="Q8K070"/>
    </source>
</evidence>
<evidence type="ECO:0000255" key="3"/>
<evidence type="ECO:0000255" key="4">
    <source>
        <dbReference type="PROSITE-ProRule" id="PRU00184"/>
    </source>
</evidence>
<evidence type="ECO:0000256" key="5">
    <source>
        <dbReference type="SAM" id="MobiDB-lite"/>
    </source>
</evidence>
<evidence type="ECO:0000303" key="6">
    <source ref="1"/>
</evidence>